<comment type="function">
    <text evidence="9">May act as a soluble regulator of keratinocyte differentiation.</text>
</comment>
<comment type="subunit">
    <text evidence="1">Homooligomer. Seems to be able to homodimerize and homotrimerize (By similarity).</text>
</comment>
<comment type="subcellular location">
    <subcellularLocation>
        <location evidence="4">Secreted</location>
    </subcellularLocation>
</comment>
<comment type="alternative products">
    <event type="alternative splicing"/>
    <isoform>
        <id>Q6P253-1</id>
        <name>1</name>
        <name>Dermokine-beta</name>
        <sequence type="displayed"/>
    </isoform>
    <isoform>
        <id>Q6P253-2</id>
        <name>2</name>
        <sequence type="described" ref="VSP_033108 VSP_033109"/>
    </isoform>
    <isoform>
        <id>Q6P253-3</id>
        <name>3</name>
        <name>Dermokine-alpha</name>
        <sequence type="described" ref="VSP_033107 VSP_033110"/>
    </isoform>
    <isoform>
        <id>Q6P253-4</id>
        <name>4</name>
        <sequence type="described" ref="VSP_033109"/>
    </isoform>
</comment>
<comment type="tissue specificity">
    <text evidence="3 4">Highly expressed in stratified epithelia; such as the skin, tongue, esophagus, forestomach and vagina. Also found in lung, trachea and urinary bladder.</text>
</comment>
<comment type="developmental stage">
    <text evidence="3">Expression begins during the period of stratification at 15.5 dpc, increases up to 17.5 dpc and decreases at 18.5 dpc.</text>
</comment>
<comment type="PTM">
    <text evidence="1">O-glycosylated.</text>
</comment>
<comment type="similarity">
    <text evidence="9">Belongs to the dermokine family.</text>
</comment>
<organism>
    <name type="scientific">Mus musculus</name>
    <name type="common">Mouse</name>
    <dbReference type="NCBI Taxonomy" id="10090"/>
    <lineage>
        <taxon>Eukaryota</taxon>
        <taxon>Metazoa</taxon>
        <taxon>Chordata</taxon>
        <taxon>Craniata</taxon>
        <taxon>Vertebrata</taxon>
        <taxon>Euteleostomi</taxon>
        <taxon>Mammalia</taxon>
        <taxon>Eutheria</taxon>
        <taxon>Euarchontoglires</taxon>
        <taxon>Glires</taxon>
        <taxon>Rodentia</taxon>
        <taxon>Myomorpha</taxon>
        <taxon>Muroidea</taxon>
        <taxon>Muridae</taxon>
        <taxon>Murinae</taxon>
        <taxon>Mus</taxon>
        <taxon>Mus</taxon>
    </lineage>
</organism>
<sequence>MKLQGSLACLLLALCLGGGAANPLHSGGEGTGASAAHGAGDAISHGIGEAVGQGAKEAASSGIQNALGQGHGEEGGSTLMGSRGDVFEHRLGEAARSLGNAGNEIGRQAEDIIRQGVDAVHNAGSWGTSGGHGAYGSQGGAGVQGNPGPQGTPWASGGNYGTNSLGGSVGQGGNGGPLDYETNAQGAVAQPGYGTVRGNNQNSGCTNPPPSGSHESFSNSGGSSNDGSRGSQGSHGSNGQGSSGRGGGQGNSDNNGSSSSSSGSNSGNSNSGNSGNSNSGNSGNSGSGSRDIETSNFDEGYSVSRGTGSRGGSGGSGGSGGSGGSGGSGGGNKPECNNPGNDVRMAGGSGSQGHGSNGGNIQKEAVNGLNTMNSDASTLPFNIDNFWENLKSKTRFINWDAINKGHAPSPSTRALLYFRKLWENFKRSTPFFNWKQIEGSDLSSLQKRAGGADQFSKPEARQDLSADSSKNYYNNQQVNPTYNWQYYTKTTAKAGVTPSSSSASRAQPGLLKWLKFW</sequence>
<keyword id="KW-0025">Alternative splicing</keyword>
<keyword id="KW-0221">Differentiation</keyword>
<keyword id="KW-0325">Glycoprotein</keyword>
<keyword id="KW-1185">Reference proteome</keyword>
<keyword id="KW-0964">Secreted</keyword>
<keyword id="KW-0732">Signal</keyword>
<proteinExistence type="evidence at transcript level"/>
<gene>
    <name type="primary">Dmkn</name>
</gene>
<protein>
    <recommendedName>
        <fullName>Dermokine</fullName>
    </recommendedName>
    <alternativeName>
        <fullName>Epidermis-specific secreted protein SK30/SK89</fullName>
    </alternativeName>
</protein>
<dbReference type="EMBL" id="AY444557">
    <property type="protein sequence ID" value="AAR20796.1"/>
    <property type="molecule type" value="mRNA"/>
</dbReference>
<dbReference type="EMBL" id="AY444558">
    <property type="protein sequence ID" value="AAR20797.1"/>
    <property type="molecule type" value="mRNA"/>
</dbReference>
<dbReference type="EMBL" id="AY622962">
    <property type="protein sequence ID" value="AAT68266.1"/>
    <property type="molecule type" value="mRNA"/>
</dbReference>
<dbReference type="EMBL" id="AY622963">
    <property type="protein sequence ID" value="AAT68267.1"/>
    <property type="molecule type" value="mRNA"/>
</dbReference>
<dbReference type="EMBL" id="AK003695">
    <property type="protein sequence ID" value="BAB22943.1"/>
    <property type="molecule type" value="mRNA"/>
</dbReference>
<dbReference type="EMBL" id="BC064724">
    <property type="protein sequence ID" value="AAH64724.1"/>
    <property type="molecule type" value="mRNA"/>
</dbReference>
<dbReference type="CCDS" id="CCDS39892.1">
    <molecule id="Q6P253-4"/>
</dbReference>
<dbReference type="CCDS" id="CCDS39893.1">
    <molecule id="Q6P253-3"/>
</dbReference>
<dbReference type="CCDS" id="CCDS52184.1">
    <molecule id="Q6P253-2"/>
</dbReference>
<dbReference type="RefSeq" id="NP_001159646.1">
    <property type="nucleotide sequence ID" value="NM_001166174.1"/>
</dbReference>
<dbReference type="RefSeq" id="NP_082894.1">
    <molecule id="Q6P253-3"/>
    <property type="nucleotide sequence ID" value="NM_028618.2"/>
</dbReference>
<dbReference type="RefSeq" id="NP_766487.3">
    <property type="nucleotide sequence ID" value="NM_172899.4"/>
</dbReference>
<dbReference type="FunCoup" id="Q6P253">
    <property type="interactions" value="256"/>
</dbReference>
<dbReference type="STRING" id="10090.ENSMUSP00000129031"/>
<dbReference type="PhosphoSitePlus" id="Q6P253"/>
<dbReference type="CPTAC" id="non-CPTAC-3292"/>
<dbReference type="PaxDb" id="10090-ENSMUSP00000129031"/>
<dbReference type="PeptideAtlas" id="Q6P253"/>
<dbReference type="ProteomicsDB" id="279726">
    <molecule id="Q6P253-1"/>
</dbReference>
<dbReference type="ProteomicsDB" id="279727">
    <molecule id="Q6P253-2"/>
</dbReference>
<dbReference type="ProteomicsDB" id="279728">
    <molecule id="Q6P253-3"/>
</dbReference>
<dbReference type="ProteomicsDB" id="279729">
    <molecule id="Q6P253-4"/>
</dbReference>
<dbReference type="Antibodypedia" id="29370">
    <property type="antibodies" value="102 antibodies from 19 providers"/>
</dbReference>
<dbReference type="Ensembl" id="ENSMUST00000041703.10">
    <molecule id="Q6P253-3"/>
    <property type="protein sequence ID" value="ENSMUSP00000042300.8"/>
    <property type="gene ID" value="ENSMUSG00000060962.14"/>
</dbReference>
<dbReference type="GeneID" id="73712"/>
<dbReference type="KEGG" id="mmu:73712"/>
<dbReference type="UCSC" id="uc009ggk.2">
    <molecule id="Q6P253-3"/>
    <property type="organism name" value="mouse"/>
</dbReference>
<dbReference type="AGR" id="MGI:1920962"/>
<dbReference type="CTD" id="93099"/>
<dbReference type="MGI" id="MGI:1920962">
    <property type="gene designation" value="Dmkn"/>
</dbReference>
<dbReference type="VEuPathDB" id="HostDB:ENSMUSG00000060962"/>
<dbReference type="eggNOG" id="ENOG502QQ65">
    <property type="taxonomic scope" value="Eukaryota"/>
</dbReference>
<dbReference type="GeneTree" id="ENSGT00570000079107"/>
<dbReference type="HOGENOM" id="CLU_189557_0_0_1"/>
<dbReference type="InParanoid" id="Q6P253"/>
<dbReference type="OrthoDB" id="9845972at2759"/>
<dbReference type="PhylomeDB" id="Q6P253"/>
<dbReference type="BioGRID-ORCS" id="73712">
    <property type="hits" value="2 hits in 73 CRISPR screens"/>
</dbReference>
<dbReference type="ChiTaRS" id="Dmkn">
    <property type="organism name" value="mouse"/>
</dbReference>
<dbReference type="PRO" id="PR:Q6P253"/>
<dbReference type="Proteomes" id="UP000000589">
    <property type="component" value="Chromosome 7"/>
</dbReference>
<dbReference type="RNAct" id="Q6P253">
    <property type="molecule type" value="protein"/>
</dbReference>
<dbReference type="Bgee" id="ENSMUSG00000060962">
    <property type="expression patterns" value="Expressed in tail skin and 123 other cell types or tissues"/>
</dbReference>
<dbReference type="ExpressionAtlas" id="Q6P253">
    <property type="expression patterns" value="baseline and differential"/>
</dbReference>
<dbReference type="GO" id="GO:0005615">
    <property type="term" value="C:extracellular space"/>
    <property type="evidence" value="ECO:0000314"/>
    <property type="project" value="MGI"/>
</dbReference>
<dbReference type="GO" id="GO:0030154">
    <property type="term" value="P:cell differentiation"/>
    <property type="evidence" value="ECO:0007669"/>
    <property type="project" value="UniProtKB-KW"/>
</dbReference>
<dbReference type="GO" id="GO:1903575">
    <property type="term" value="P:cornified envelope assembly"/>
    <property type="evidence" value="ECO:0000315"/>
    <property type="project" value="MGI"/>
</dbReference>
<dbReference type="CDD" id="cd21118">
    <property type="entry name" value="dermokine"/>
    <property type="match status" value="1"/>
</dbReference>
<dbReference type="InterPro" id="IPR033541">
    <property type="entry name" value="Dermokine"/>
</dbReference>
<dbReference type="PANTHER" id="PTHR36881">
    <property type="entry name" value="DERMOKINE"/>
    <property type="match status" value="1"/>
</dbReference>
<dbReference type="PANTHER" id="PTHR36881:SF1">
    <property type="entry name" value="DERMOKINE"/>
    <property type="match status" value="1"/>
</dbReference>
<reference key="1">
    <citation type="journal article" date="2004" name="Gene">
        <title>Identification of a conserved cluster of skin-specific genes encoding secreted proteins.</title>
        <authorList>
            <person name="Moffatt P."/>
            <person name="Salois P."/>
            <person name="St Amant N."/>
            <person name="Gaumond M.-H."/>
            <person name="Lanctot C."/>
        </authorList>
    </citation>
    <scope>NUCLEOTIDE SEQUENCE [MRNA] (ISOFORMS 2 AND 3)</scope>
    <scope>SUBCELLULAR LOCATION</scope>
    <scope>TISSUE SPECIFICITY</scope>
    <source>
        <strain>CD-1</strain>
    </source>
</reference>
<reference key="2">
    <citation type="journal article" date="2004" name="Genomics">
        <title>Identification of novel keratinocyte-secreted peptides dermokine-alpha/-beta and a new stratified epithelium-secreted protein gene complex on human chromosome 19q13.1.</title>
        <authorList>
            <person name="Matsui T."/>
            <person name="Hayashi-Kisumi F."/>
            <person name="Kinoshita Y."/>
            <person name="Katahira S."/>
            <person name="Morita K."/>
            <person name="Miyachi Y."/>
            <person name="Ono Y."/>
            <person name="Imai T."/>
            <person name="Tanigawa Y."/>
            <person name="Komiya T."/>
            <person name="Tsukita S."/>
        </authorList>
    </citation>
    <scope>NUCLEOTIDE SEQUENCE [LARGE SCALE MRNA] (ISOFORMS 1 AND 4)</scope>
    <scope>TISSUE SPECIFICITY</scope>
    <scope>DEVELOPMENTAL STAGE</scope>
    <scope>FUNCTION</scope>
    <source>
        <strain>BALB/cJ</strain>
        <tissue>Skin</tissue>
    </source>
</reference>
<reference key="3">
    <citation type="journal article" date="2005" name="Science">
        <title>The transcriptional landscape of the mammalian genome.</title>
        <authorList>
            <person name="Carninci P."/>
            <person name="Kasukawa T."/>
            <person name="Katayama S."/>
            <person name="Gough J."/>
            <person name="Frith M.C."/>
            <person name="Maeda N."/>
            <person name="Oyama R."/>
            <person name="Ravasi T."/>
            <person name="Lenhard B."/>
            <person name="Wells C."/>
            <person name="Kodzius R."/>
            <person name="Shimokawa K."/>
            <person name="Bajic V.B."/>
            <person name="Brenner S.E."/>
            <person name="Batalov S."/>
            <person name="Forrest A.R."/>
            <person name="Zavolan M."/>
            <person name="Davis M.J."/>
            <person name="Wilming L.G."/>
            <person name="Aidinis V."/>
            <person name="Allen J.E."/>
            <person name="Ambesi-Impiombato A."/>
            <person name="Apweiler R."/>
            <person name="Aturaliya R.N."/>
            <person name="Bailey T.L."/>
            <person name="Bansal M."/>
            <person name="Baxter L."/>
            <person name="Beisel K.W."/>
            <person name="Bersano T."/>
            <person name="Bono H."/>
            <person name="Chalk A.M."/>
            <person name="Chiu K.P."/>
            <person name="Choudhary V."/>
            <person name="Christoffels A."/>
            <person name="Clutterbuck D.R."/>
            <person name="Crowe M.L."/>
            <person name="Dalla E."/>
            <person name="Dalrymple B.P."/>
            <person name="de Bono B."/>
            <person name="Della Gatta G."/>
            <person name="di Bernardo D."/>
            <person name="Down T."/>
            <person name="Engstrom P."/>
            <person name="Fagiolini M."/>
            <person name="Faulkner G."/>
            <person name="Fletcher C.F."/>
            <person name="Fukushima T."/>
            <person name="Furuno M."/>
            <person name="Futaki S."/>
            <person name="Gariboldi M."/>
            <person name="Georgii-Hemming P."/>
            <person name="Gingeras T.R."/>
            <person name="Gojobori T."/>
            <person name="Green R.E."/>
            <person name="Gustincich S."/>
            <person name="Harbers M."/>
            <person name="Hayashi Y."/>
            <person name="Hensch T.K."/>
            <person name="Hirokawa N."/>
            <person name="Hill D."/>
            <person name="Huminiecki L."/>
            <person name="Iacono M."/>
            <person name="Ikeo K."/>
            <person name="Iwama A."/>
            <person name="Ishikawa T."/>
            <person name="Jakt M."/>
            <person name="Kanapin A."/>
            <person name="Katoh M."/>
            <person name="Kawasawa Y."/>
            <person name="Kelso J."/>
            <person name="Kitamura H."/>
            <person name="Kitano H."/>
            <person name="Kollias G."/>
            <person name="Krishnan S.P."/>
            <person name="Kruger A."/>
            <person name="Kummerfeld S.K."/>
            <person name="Kurochkin I.V."/>
            <person name="Lareau L.F."/>
            <person name="Lazarevic D."/>
            <person name="Lipovich L."/>
            <person name="Liu J."/>
            <person name="Liuni S."/>
            <person name="McWilliam S."/>
            <person name="Madan Babu M."/>
            <person name="Madera M."/>
            <person name="Marchionni L."/>
            <person name="Matsuda H."/>
            <person name="Matsuzawa S."/>
            <person name="Miki H."/>
            <person name="Mignone F."/>
            <person name="Miyake S."/>
            <person name="Morris K."/>
            <person name="Mottagui-Tabar S."/>
            <person name="Mulder N."/>
            <person name="Nakano N."/>
            <person name="Nakauchi H."/>
            <person name="Ng P."/>
            <person name="Nilsson R."/>
            <person name="Nishiguchi S."/>
            <person name="Nishikawa S."/>
            <person name="Nori F."/>
            <person name="Ohara O."/>
            <person name="Okazaki Y."/>
            <person name="Orlando V."/>
            <person name="Pang K.C."/>
            <person name="Pavan W.J."/>
            <person name="Pavesi G."/>
            <person name="Pesole G."/>
            <person name="Petrovsky N."/>
            <person name="Piazza S."/>
            <person name="Reed J."/>
            <person name="Reid J.F."/>
            <person name="Ring B.Z."/>
            <person name="Ringwald M."/>
            <person name="Rost B."/>
            <person name="Ruan Y."/>
            <person name="Salzberg S.L."/>
            <person name="Sandelin A."/>
            <person name="Schneider C."/>
            <person name="Schoenbach C."/>
            <person name="Sekiguchi K."/>
            <person name="Semple C.A."/>
            <person name="Seno S."/>
            <person name="Sessa L."/>
            <person name="Sheng Y."/>
            <person name="Shibata Y."/>
            <person name="Shimada H."/>
            <person name="Shimada K."/>
            <person name="Silva D."/>
            <person name="Sinclair B."/>
            <person name="Sperling S."/>
            <person name="Stupka E."/>
            <person name="Sugiura K."/>
            <person name="Sultana R."/>
            <person name="Takenaka Y."/>
            <person name="Taki K."/>
            <person name="Tammoja K."/>
            <person name="Tan S.L."/>
            <person name="Tang S."/>
            <person name="Taylor M.S."/>
            <person name="Tegner J."/>
            <person name="Teichmann S.A."/>
            <person name="Ueda H.R."/>
            <person name="van Nimwegen E."/>
            <person name="Verardo R."/>
            <person name="Wei C.L."/>
            <person name="Yagi K."/>
            <person name="Yamanishi H."/>
            <person name="Zabarovsky E."/>
            <person name="Zhu S."/>
            <person name="Zimmer A."/>
            <person name="Hide W."/>
            <person name="Bult C."/>
            <person name="Grimmond S.M."/>
            <person name="Teasdale R.D."/>
            <person name="Liu E.T."/>
            <person name="Brusic V."/>
            <person name="Quackenbush J."/>
            <person name="Wahlestedt C."/>
            <person name="Mattick J.S."/>
            <person name="Hume D.A."/>
            <person name="Kai C."/>
            <person name="Sasaki D."/>
            <person name="Tomaru Y."/>
            <person name="Fukuda S."/>
            <person name="Kanamori-Katayama M."/>
            <person name="Suzuki M."/>
            <person name="Aoki J."/>
            <person name="Arakawa T."/>
            <person name="Iida J."/>
            <person name="Imamura K."/>
            <person name="Itoh M."/>
            <person name="Kato T."/>
            <person name="Kawaji H."/>
            <person name="Kawagashira N."/>
            <person name="Kawashima T."/>
            <person name="Kojima M."/>
            <person name="Kondo S."/>
            <person name="Konno H."/>
            <person name="Nakano K."/>
            <person name="Ninomiya N."/>
            <person name="Nishio T."/>
            <person name="Okada M."/>
            <person name="Plessy C."/>
            <person name="Shibata K."/>
            <person name="Shiraki T."/>
            <person name="Suzuki S."/>
            <person name="Tagami M."/>
            <person name="Waki K."/>
            <person name="Watahiki A."/>
            <person name="Okamura-Oho Y."/>
            <person name="Suzuki H."/>
            <person name="Kawai J."/>
            <person name="Hayashizaki Y."/>
        </authorList>
    </citation>
    <scope>NUCLEOTIDE SEQUENCE [LARGE SCALE MRNA] (ISOFORM 3)</scope>
    <source>
        <strain>C57BL/6J</strain>
    </source>
</reference>
<reference key="4">
    <citation type="journal article" date="2004" name="Genome Res.">
        <title>The status, quality, and expansion of the NIH full-length cDNA project: the Mammalian Gene Collection (MGC).</title>
        <authorList>
            <consortium name="The MGC Project Team"/>
        </authorList>
    </citation>
    <scope>NUCLEOTIDE SEQUENCE [LARGE SCALE MRNA] (ISOFORM 4)</scope>
    <source>
        <strain>C57BL/6J</strain>
        <tissue>Embryo</tissue>
    </source>
</reference>
<feature type="signal peptide" evidence="1">
    <location>
        <begin position="1"/>
        <end position="21"/>
    </location>
</feature>
<feature type="chain" id="PRO_0000330765" description="Dermokine">
    <location>
        <begin position="22"/>
        <end position="517"/>
    </location>
</feature>
<feature type="region of interest" description="Disordered" evidence="2">
    <location>
        <begin position="51"/>
        <end position="83"/>
    </location>
</feature>
<feature type="region of interest" description="Disordered" evidence="2">
    <location>
        <begin position="123"/>
        <end position="364"/>
    </location>
</feature>
<feature type="compositionally biased region" description="Gly residues" evidence="2">
    <location>
        <begin position="127"/>
        <end position="145"/>
    </location>
</feature>
<feature type="compositionally biased region" description="Gly residues" evidence="2">
    <location>
        <begin position="167"/>
        <end position="176"/>
    </location>
</feature>
<feature type="compositionally biased region" description="Polar residues" evidence="2">
    <location>
        <begin position="197"/>
        <end position="206"/>
    </location>
</feature>
<feature type="compositionally biased region" description="Low complexity" evidence="2">
    <location>
        <begin position="212"/>
        <end position="235"/>
    </location>
</feature>
<feature type="compositionally biased region" description="Gly residues" evidence="2">
    <location>
        <begin position="236"/>
        <end position="250"/>
    </location>
</feature>
<feature type="compositionally biased region" description="Low complexity" evidence="2">
    <location>
        <begin position="251"/>
        <end position="289"/>
    </location>
</feature>
<feature type="compositionally biased region" description="Gly residues" evidence="2">
    <location>
        <begin position="308"/>
        <end position="332"/>
    </location>
</feature>
<feature type="compositionally biased region" description="Gly residues" evidence="2">
    <location>
        <begin position="347"/>
        <end position="358"/>
    </location>
</feature>
<feature type="splice variant" id="VSP_033107" description="In isoform 3." evidence="6 8">
    <location>
        <begin position="1"/>
        <end position="408"/>
    </location>
</feature>
<feature type="splice variant" id="VSP_033108" description="In isoform 2." evidence="6">
    <location>
        <begin position="291"/>
        <end position="305"/>
    </location>
</feature>
<feature type="splice variant" id="VSP_033109" description="In isoform 2 and isoform 4." evidence="5 6 7">
    <location>
        <begin position="314"/>
        <end position="322"/>
    </location>
</feature>
<feature type="splice variant" id="VSP_033110" description="In isoform 3." evidence="6 8">
    <original>SPSTRALLYFRKLWENFKRSTPFFNWKQIE</original>
    <variation>MKPVTASALLLILLGVAWRGDSHSW</variation>
    <location>
        <begin position="409"/>
        <end position="438"/>
    </location>
</feature>
<feature type="sequence conflict" description="In Ref. 1; AAR20796." evidence="9" ref="1">
    <original>E</original>
    <variation>D</variation>
    <location>
        <position position="88"/>
    </location>
</feature>
<feature type="sequence conflict" description="In Ref. 1; AAR20796." evidence="9" ref="1">
    <original>R</original>
    <variation>K</variation>
    <location>
        <position position="107"/>
    </location>
</feature>
<feature type="sequence conflict" description="In Ref. 1; AAR20796." evidence="9" ref="1">
    <original>D</original>
    <variation>N</variation>
    <location>
        <position position="118"/>
    </location>
</feature>
<feature type="sequence conflict" description="In Ref. 1; AAR20796." evidence="9" ref="1">
    <original>A</original>
    <variation>P</variation>
    <location>
        <position position="134"/>
    </location>
</feature>
<feature type="sequence conflict" description="In Ref. 1; AAR20796 and 2; AAT68267." evidence="9" ref="1 2">
    <original>D</original>
    <variation>N</variation>
    <location>
        <position position="179"/>
    </location>
</feature>
<evidence type="ECO:0000250" key="1"/>
<evidence type="ECO:0000256" key="2">
    <source>
        <dbReference type="SAM" id="MobiDB-lite"/>
    </source>
</evidence>
<evidence type="ECO:0000269" key="3">
    <source>
    </source>
</evidence>
<evidence type="ECO:0000269" key="4">
    <source>
    </source>
</evidence>
<evidence type="ECO:0000303" key="5">
    <source>
    </source>
</evidence>
<evidence type="ECO:0000303" key="6">
    <source>
    </source>
</evidence>
<evidence type="ECO:0000303" key="7">
    <source>
    </source>
</evidence>
<evidence type="ECO:0000303" key="8">
    <source>
    </source>
</evidence>
<evidence type="ECO:0000305" key="9"/>
<accession>Q6P253</accession>
<accession>Q6E0U6</accession>
<accession>Q6SZJ9</accession>
<accession>Q9D1D0</accession>
<name>DMKN_MOUSE</name>